<evidence type="ECO:0000255" key="1">
    <source>
        <dbReference type="HAMAP-Rule" id="MF_01007"/>
    </source>
</evidence>
<feature type="chain" id="PRO_0000387035" description="Ribosomal RNA small subunit methyltransferase H">
    <location>
        <begin position="1"/>
        <end position="316"/>
    </location>
</feature>
<feature type="binding site" evidence="1">
    <location>
        <begin position="42"/>
        <end position="44"/>
    </location>
    <ligand>
        <name>S-adenosyl-L-methionine</name>
        <dbReference type="ChEBI" id="CHEBI:59789"/>
    </ligand>
</feature>
<feature type="binding site" evidence="1">
    <location>
        <position position="62"/>
    </location>
    <ligand>
        <name>S-adenosyl-L-methionine</name>
        <dbReference type="ChEBI" id="CHEBI:59789"/>
    </ligand>
</feature>
<feature type="binding site" evidence="1">
    <location>
        <position position="86"/>
    </location>
    <ligand>
        <name>S-adenosyl-L-methionine</name>
        <dbReference type="ChEBI" id="CHEBI:59789"/>
    </ligand>
</feature>
<feature type="binding site" evidence="1">
    <location>
        <position position="104"/>
    </location>
    <ligand>
        <name>S-adenosyl-L-methionine</name>
        <dbReference type="ChEBI" id="CHEBI:59789"/>
    </ligand>
</feature>
<feature type="binding site" evidence="1">
    <location>
        <position position="111"/>
    </location>
    <ligand>
        <name>S-adenosyl-L-methionine</name>
        <dbReference type="ChEBI" id="CHEBI:59789"/>
    </ligand>
</feature>
<keyword id="KW-0963">Cytoplasm</keyword>
<keyword id="KW-0489">Methyltransferase</keyword>
<keyword id="KW-0698">rRNA processing</keyword>
<keyword id="KW-0949">S-adenosyl-L-methionine</keyword>
<keyword id="KW-0808">Transferase</keyword>
<sequence>MNIAHRPVLLAEAVTALVGGPLIQNQNSENHILVIDGTFGRGGHTQALLKELNPSAHMISFDKDLDAIAVAQKINDPRLKIVHDSFAQMDQYAEAESVDGILLDLGISSPQVDEAHRGFSFRREGPLDMRMNTDHGLTAAEWLEQASLEEITHVIKTYGEERFAFQIARAIVAKREDGLPPKTTTQLASLVSSVVRTREAGQDPATRTFQALRIFINRELEDLELGLKAAMKLLKPGARLAVISFHSLEDRIVKQFMQAHAKVDVPRGLPVREKDLPQSALKIISRLKPSDAEVSENPRARSAIMRVAEKRIGAAS</sequence>
<organism>
    <name type="scientific">Polynucleobacter necessarius subsp. necessarius (strain STIR1)</name>
    <dbReference type="NCBI Taxonomy" id="452638"/>
    <lineage>
        <taxon>Bacteria</taxon>
        <taxon>Pseudomonadati</taxon>
        <taxon>Pseudomonadota</taxon>
        <taxon>Betaproteobacteria</taxon>
        <taxon>Burkholderiales</taxon>
        <taxon>Burkholderiaceae</taxon>
        <taxon>Polynucleobacter</taxon>
    </lineage>
</organism>
<dbReference type="EC" id="2.1.1.199" evidence="1"/>
<dbReference type="EMBL" id="CP001010">
    <property type="protein sequence ID" value="ACB43478.1"/>
    <property type="molecule type" value="Genomic_DNA"/>
</dbReference>
<dbReference type="SMR" id="B1XT01"/>
<dbReference type="STRING" id="452638.Pnec_0173"/>
<dbReference type="KEGG" id="pne:Pnec_0173"/>
<dbReference type="eggNOG" id="COG0275">
    <property type="taxonomic scope" value="Bacteria"/>
</dbReference>
<dbReference type="HOGENOM" id="CLU_038422_2_0_4"/>
<dbReference type="OrthoDB" id="9806637at2"/>
<dbReference type="GO" id="GO:0005737">
    <property type="term" value="C:cytoplasm"/>
    <property type="evidence" value="ECO:0007669"/>
    <property type="project" value="UniProtKB-SubCell"/>
</dbReference>
<dbReference type="GO" id="GO:0071424">
    <property type="term" value="F:rRNA (cytosine-N4-)-methyltransferase activity"/>
    <property type="evidence" value="ECO:0007669"/>
    <property type="project" value="UniProtKB-UniRule"/>
</dbReference>
<dbReference type="GO" id="GO:0070475">
    <property type="term" value="P:rRNA base methylation"/>
    <property type="evidence" value="ECO:0007669"/>
    <property type="project" value="UniProtKB-UniRule"/>
</dbReference>
<dbReference type="Gene3D" id="1.10.150.170">
    <property type="entry name" value="Putative methyltransferase TM0872, insert domain"/>
    <property type="match status" value="1"/>
</dbReference>
<dbReference type="Gene3D" id="3.40.50.150">
    <property type="entry name" value="Vaccinia Virus protein VP39"/>
    <property type="match status" value="1"/>
</dbReference>
<dbReference type="HAMAP" id="MF_01007">
    <property type="entry name" value="16SrRNA_methyltr_H"/>
    <property type="match status" value="1"/>
</dbReference>
<dbReference type="InterPro" id="IPR002903">
    <property type="entry name" value="RsmH"/>
</dbReference>
<dbReference type="InterPro" id="IPR023397">
    <property type="entry name" value="SAM-dep_MeTrfase_MraW_recog"/>
</dbReference>
<dbReference type="InterPro" id="IPR029063">
    <property type="entry name" value="SAM-dependent_MTases_sf"/>
</dbReference>
<dbReference type="NCBIfam" id="TIGR00006">
    <property type="entry name" value="16S rRNA (cytosine(1402)-N(4))-methyltransferase RsmH"/>
    <property type="match status" value="1"/>
</dbReference>
<dbReference type="PANTHER" id="PTHR11265:SF0">
    <property type="entry name" value="12S RRNA N4-METHYLCYTIDINE METHYLTRANSFERASE"/>
    <property type="match status" value="1"/>
</dbReference>
<dbReference type="PANTHER" id="PTHR11265">
    <property type="entry name" value="S-ADENOSYL-METHYLTRANSFERASE MRAW"/>
    <property type="match status" value="1"/>
</dbReference>
<dbReference type="Pfam" id="PF01795">
    <property type="entry name" value="Methyltransf_5"/>
    <property type="match status" value="1"/>
</dbReference>
<dbReference type="PIRSF" id="PIRSF004486">
    <property type="entry name" value="MraW"/>
    <property type="match status" value="1"/>
</dbReference>
<dbReference type="SUPFAM" id="SSF81799">
    <property type="entry name" value="Putative methyltransferase TM0872, insert domain"/>
    <property type="match status" value="1"/>
</dbReference>
<dbReference type="SUPFAM" id="SSF53335">
    <property type="entry name" value="S-adenosyl-L-methionine-dependent methyltransferases"/>
    <property type="match status" value="1"/>
</dbReference>
<reference key="1">
    <citation type="journal article" date="2013" name="Proc. Natl. Acad. Sci. U.S.A.">
        <title>Polynucleobacter necessarius, a model for genome reduction in both free-living and symbiotic bacteria.</title>
        <authorList>
            <person name="Boscaro V."/>
            <person name="Felletti M."/>
            <person name="Vannini C."/>
            <person name="Ackerman M.S."/>
            <person name="Chain P.S."/>
            <person name="Malfatti S."/>
            <person name="Vergez L.M."/>
            <person name="Shin M."/>
            <person name="Doak T.G."/>
            <person name="Lynch M."/>
            <person name="Petroni G."/>
        </authorList>
    </citation>
    <scope>NUCLEOTIDE SEQUENCE [LARGE SCALE GENOMIC DNA]</scope>
    <source>
        <strain>STIR1</strain>
    </source>
</reference>
<proteinExistence type="inferred from homology"/>
<accession>B1XT01</accession>
<name>RSMH_POLNS</name>
<comment type="function">
    <text evidence="1">Specifically methylates the N4 position of cytidine in position 1402 (C1402) of 16S rRNA.</text>
</comment>
<comment type="catalytic activity">
    <reaction evidence="1">
        <text>cytidine(1402) in 16S rRNA + S-adenosyl-L-methionine = N(4)-methylcytidine(1402) in 16S rRNA + S-adenosyl-L-homocysteine + H(+)</text>
        <dbReference type="Rhea" id="RHEA:42928"/>
        <dbReference type="Rhea" id="RHEA-COMP:10286"/>
        <dbReference type="Rhea" id="RHEA-COMP:10287"/>
        <dbReference type="ChEBI" id="CHEBI:15378"/>
        <dbReference type="ChEBI" id="CHEBI:57856"/>
        <dbReference type="ChEBI" id="CHEBI:59789"/>
        <dbReference type="ChEBI" id="CHEBI:74506"/>
        <dbReference type="ChEBI" id="CHEBI:82748"/>
        <dbReference type="EC" id="2.1.1.199"/>
    </reaction>
</comment>
<comment type="subcellular location">
    <subcellularLocation>
        <location evidence="1">Cytoplasm</location>
    </subcellularLocation>
</comment>
<comment type="similarity">
    <text evidence="1">Belongs to the methyltransferase superfamily. RsmH family.</text>
</comment>
<gene>
    <name evidence="1" type="primary">rsmH</name>
    <name type="synonym">mraW</name>
    <name type="ordered locus">Pnec_0173</name>
</gene>
<protein>
    <recommendedName>
        <fullName evidence="1">Ribosomal RNA small subunit methyltransferase H</fullName>
        <ecNumber evidence="1">2.1.1.199</ecNumber>
    </recommendedName>
    <alternativeName>
        <fullName evidence="1">16S rRNA m(4)C1402 methyltransferase</fullName>
    </alternativeName>
    <alternativeName>
        <fullName evidence="1">rRNA (cytosine-N(4)-)-methyltransferase RsmH</fullName>
    </alternativeName>
</protein>